<sequence length="503" mass="56055">MEKGGNIQLEIPDFSNSVLSHLNQLRMQGRLCDIVVNVQGQAFRAHKVVLAASSPYFRDHMSLNEMSTVSISVIKNPTVFEQLLSFCYTGRICLQLADIISYLTAASFLQMQHIIDKCTQILEGIHFKINVAEVEAELSQTRTKHQERPPESHRVTPNLNRSLSPRHNTPKGNRRGQVSAVLDIRELSPPEESTSPQIIEPSSDVESREPILRINRAGQWYVETGVADRGGRSDDEVRVLGAVHIKTENLEEWLGPENQPSGEDGSSAEEVTAMVIDTTGHGSVGQENYTLGSSGAKVARPTSSEVDRFSPSGSVVPLTERHRARSESPGRMDEPKQPSSQVEESAMMGVSGYVEYLREQEVSERWFRYNPRLTCIYCAKSFNQKGSLDRHMRLHMGITPFVCRMCGKKYTRKDQLEYHIRKHTGNKPFHCHVCGKSFPFQAILNQHFRKNHPGCIPLEGPHSISPETTVTSRGQAEEESPSQEETVAPGEAVQGSVSTTGPD</sequence>
<evidence type="ECO:0000255" key="1">
    <source>
        <dbReference type="PROSITE-ProRule" id="PRU00037"/>
    </source>
</evidence>
<evidence type="ECO:0000255" key="2">
    <source>
        <dbReference type="PROSITE-ProRule" id="PRU00042"/>
    </source>
</evidence>
<evidence type="ECO:0000256" key="3">
    <source>
        <dbReference type="SAM" id="MobiDB-lite"/>
    </source>
</evidence>
<evidence type="ECO:0000303" key="4">
    <source>
    </source>
</evidence>
<evidence type="ECO:0000303" key="5">
    <source>
    </source>
</evidence>
<evidence type="ECO:0000305" key="6"/>
<proteinExistence type="evidence at protein level"/>
<comment type="function">
    <text>May be involved in transcriptional regulation.</text>
</comment>
<comment type="subcellular location">
    <subcellularLocation>
        <location evidence="6">Nucleus</location>
    </subcellularLocation>
</comment>
<comment type="alternative products">
    <event type="alternative splicing"/>
    <isoform>
        <id>Q5TC79-1</id>
        <name>1</name>
        <sequence type="displayed"/>
    </isoform>
    <isoform>
        <id>Q5TC79-2</id>
        <name>2</name>
        <sequence type="described" ref="VSP_014441 VSP_014442"/>
    </isoform>
    <isoform>
        <id>Q5TC79-3</id>
        <name>3</name>
        <sequence type="described" ref="VSP_014440"/>
    </isoform>
</comment>
<reference key="1">
    <citation type="journal article" date="2004" name="Nat. Genet.">
        <title>Complete sequencing and characterization of 21,243 full-length human cDNAs.</title>
        <authorList>
            <person name="Ota T."/>
            <person name="Suzuki Y."/>
            <person name="Nishikawa T."/>
            <person name="Otsuki T."/>
            <person name="Sugiyama T."/>
            <person name="Irie R."/>
            <person name="Wakamatsu A."/>
            <person name="Hayashi K."/>
            <person name="Sato H."/>
            <person name="Nagai K."/>
            <person name="Kimura K."/>
            <person name="Makita H."/>
            <person name="Sekine M."/>
            <person name="Obayashi M."/>
            <person name="Nishi T."/>
            <person name="Shibahara T."/>
            <person name="Tanaka T."/>
            <person name="Ishii S."/>
            <person name="Yamamoto J."/>
            <person name="Saito K."/>
            <person name="Kawai Y."/>
            <person name="Isono Y."/>
            <person name="Nakamura Y."/>
            <person name="Nagahari K."/>
            <person name="Murakami K."/>
            <person name="Yasuda T."/>
            <person name="Iwayanagi T."/>
            <person name="Wagatsuma M."/>
            <person name="Shiratori A."/>
            <person name="Sudo H."/>
            <person name="Hosoiri T."/>
            <person name="Kaku Y."/>
            <person name="Kodaira H."/>
            <person name="Kondo H."/>
            <person name="Sugawara M."/>
            <person name="Takahashi M."/>
            <person name="Kanda K."/>
            <person name="Yokoi T."/>
            <person name="Furuya T."/>
            <person name="Kikkawa E."/>
            <person name="Omura Y."/>
            <person name="Abe K."/>
            <person name="Kamihara K."/>
            <person name="Katsuta N."/>
            <person name="Sato K."/>
            <person name="Tanikawa M."/>
            <person name="Yamazaki M."/>
            <person name="Ninomiya K."/>
            <person name="Ishibashi T."/>
            <person name="Yamashita H."/>
            <person name="Murakawa K."/>
            <person name="Fujimori K."/>
            <person name="Tanai H."/>
            <person name="Kimata M."/>
            <person name="Watanabe M."/>
            <person name="Hiraoka S."/>
            <person name="Chiba Y."/>
            <person name="Ishida S."/>
            <person name="Ono Y."/>
            <person name="Takiguchi S."/>
            <person name="Watanabe S."/>
            <person name="Yosida M."/>
            <person name="Hotuta T."/>
            <person name="Kusano J."/>
            <person name="Kanehori K."/>
            <person name="Takahashi-Fujii A."/>
            <person name="Hara H."/>
            <person name="Tanase T.-O."/>
            <person name="Nomura Y."/>
            <person name="Togiya S."/>
            <person name="Komai F."/>
            <person name="Hara R."/>
            <person name="Takeuchi K."/>
            <person name="Arita M."/>
            <person name="Imose N."/>
            <person name="Musashino K."/>
            <person name="Yuuki H."/>
            <person name="Oshima A."/>
            <person name="Sasaki N."/>
            <person name="Aotsuka S."/>
            <person name="Yoshikawa Y."/>
            <person name="Matsunawa H."/>
            <person name="Ichihara T."/>
            <person name="Shiohata N."/>
            <person name="Sano S."/>
            <person name="Moriya S."/>
            <person name="Momiyama H."/>
            <person name="Satoh N."/>
            <person name="Takami S."/>
            <person name="Terashima Y."/>
            <person name="Suzuki O."/>
            <person name="Nakagawa S."/>
            <person name="Senoh A."/>
            <person name="Mizoguchi H."/>
            <person name="Goto Y."/>
            <person name="Shimizu F."/>
            <person name="Wakebe H."/>
            <person name="Hishigaki H."/>
            <person name="Watanabe T."/>
            <person name="Sugiyama A."/>
            <person name="Takemoto M."/>
            <person name="Kawakami B."/>
            <person name="Yamazaki M."/>
            <person name="Watanabe K."/>
            <person name="Kumagai A."/>
            <person name="Itakura S."/>
            <person name="Fukuzumi Y."/>
            <person name="Fujimori Y."/>
            <person name="Komiyama M."/>
            <person name="Tashiro H."/>
            <person name="Tanigami A."/>
            <person name="Fujiwara T."/>
            <person name="Ono T."/>
            <person name="Yamada K."/>
            <person name="Fujii Y."/>
            <person name="Ozaki K."/>
            <person name="Hirao M."/>
            <person name="Ohmori Y."/>
            <person name="Kawabata A."/>
            <person name="Hikiji T."/>
            <person name="Kobatake N."/>
            <person name="Inagaki H."/>
            <person name="Ikema Y."/>
            <person name="Okamoto S."/>
            <person name="Okitani R."/>
            <person name="Kawakami T."/>
            <person name="Noguchi S."/>
            <person name="Itoh T."/>
            <person name="Shigeta K."/>
            <person name="Senba T."/>
            <person name="Matsumura K."/>
            <person name="Nakajima Y."/>
            <person name="Mizuno T."/>
            <person name="Morinaga M."/>
            <person name="Sasaki M."/>
            <person name="Togashi T."/>
            <person name="Oyama M."/>
            <person name="Hata H."/>
            <person name="Watanabe M."/>
            <person name="Komatsu T."/>
            <person name="Mizushima-Sugano J."/>
            <person name="Satoh T."/>
            <person name="Shirai Y."/>
            <person name="Takahashi Y."/>
            <person name="Nakagawa K."/>
            <person name="Okumura K."/>
            <person name="Nagase T."/>
            <person name="Nomura N."/>
            <person name="Kikuchi H."/>
            <person name="Masuho Y."/>
            <person name="Yamashita R."/>
            <person name="Nakai K."/>
            <person name="Yada T."/>
            <person name="Nakamura Y."/>
            <person name="Ohara O."/>
            <person name="Isogai T."/>
            <person name="Sugano S."/>
        </authorList>
    </citation>
    <scope>NUCLEOTIDE SEQUENCE [LARGE SCALE MRNA] (ISOFORM 3)</scope>
    <source>
        <tissue>Testis</tissue>
    </source>
</reference>
<reference key="2">
    <citation type="journal article" date="2006" name="Nature">
        <title>The DNA sequence and biological annotation of human chromosome 1.</title>
        <authorList>
            <person name="Gregory S.G."/>
            <person name="Barlow K.F."/>
            <person name="McLay K.E."/>
            <person name="Kaul R."/>
            <person name="Swarbreck D."/>
            <person name="Dunham A."/>
            <person name="Scott C.E."/>
            <person name="Howe K.L."/>
            <person name="Woodfine K."/>
            <person name="Spencer C.C.A."/>
            <person name="Jones M.C."/>
            <person name="Gillson C."/>
            <person name="Searle S."/>
            <person name="Zhou Y."/>
            <person name="Kokocinski F."/>
            <person name="McDonald L."/>
            <person name="Evans R."/>
            <person name="Phillips K."/>
            <person name="Atkinson A."/>
            <person name="Cooper R."/>
            <person name="Jones C."/>
            <person name="Hall R.E."/>
            <person name="Andrews T.D."/>
            <person name="Lloyd C."/>
            <person name="Ainscough R."/>
            <person name="Almeida J.P."/>
            <person name="Ambrose K.D."/>
            <person name="Anderson F."/>
            <person name="Andrew R.W."/>
            <person name="Ashwell R.I.S."/>
            <person name="Aubin K."/>
            <person name="Babbage A.K."/>
            <person name="Bagguley C.L."/>
            <person name="Bailey J."/>
            <person name="Beasley H."/>
            <person name="Bethel G."/>
            <person name="Bird C.P."/>
            <person name="Bray-Allen S."/>
            <person name="Brown J.Y."/>
            <person name="Brown A.J."/>
            <person name="Buckley D."/>
            <person name="Burton J."/>
            <person name="Bye J."/>
            <person name="Carder C."/>
            <person name="Chapman J.C."/>
            <person name="Clark S.Y."/>
            <person name="Clarke G."/>
            <person name="Clee C."/>
            <person name="Cobley V."/>
            <person name="Collier R.E."/>
            <person name="Corby N."/>
            <person name="Coville G.J."/>
            <person name="Davies J."/>
            <person name="Deadman R."/>
            <person name="Dunn M."/>
            <person name="Earthrowl M."/>
            <person name="Ellington A.G."/>
            <person name="Errington H."/>
            <person name="Frankish A."/>
            <person name="Frankland J."/>
            <person name="French L."/>
            <person name="Garner P."/>
            <person name="Garnett J."/>
            <person name="Gay L."/>
            <person name="Ghori M.R.J."/>
            <person name="Gibson R."/>
            <person name="Gilby L.M."/>
            <person name="Gillett W."/>
            <person name="Glithero R.J."/>
            <person name="Grafham D.V."/>
            <person name="Griffiths C."/>
            <person name="Griffiths-Jones S."/>
            <person name="Grocock R."/>
            <person name="Hammond S."/>
            <person name="Harrison E.S.I."/>
            <person name="Hart E."/>
            <person name="Haugen E."/>
            <person name="Heath P.D."/>
            <person name="Holmes S."/>
            <person name="Holt K."/>
            <person name="Howden P.J."/>
            <person name="Hunt A.R."/>
            <person name="Hunt S.E."/>
            <person name="Hunter G."/>
            <person name="Isherwood J."/>
            <person name="James R."/>
            <person name="Johnson C."/>
            <person name="Johnson D."/>
            <person name="Joy A."/>
            <person name="Kay M."/>
            <person name="Kershaw J.K."/>
            <person name="Kibukawa M."/>
            <person name="Kimberley A.M."/>
            <person name="King A."/>
            <person name="Knights A.J."/>
            <person name="Lad H."/>
            <person name="Laird G."/>
            <person name="Lawlor S."/>
            <person name="Leongamornlert D.A."/>
            <person name="Lloyd D.M."/>
            <person name="Loveland J."/>
            <person name="Lovell J."/>
            <person name="Lush M.J."/>
            <person name="Lyne R."/>
            <person name="Martin S."/>
            <person name="Mashreghi-Mohammadi M."/>
            <person name="Matthews L."/>
            <person name="Matthews N.S.W."/>
            <person name="McLaren S."/>
            <person name="Milne S."/>
            <person name="Mistry S."/>
            <person name="Moore M.J.F."/>
            <person name="Nickerson T."/>
            <person name="O'Dell C.N."/>
            <person name="Oliver K."/>
            <person name="Palmeiri A."/>
            <person name="Palmer S.A."/>
            <person name="Parker A."/>
            <person name="Patel D."/>
            <person name="Pearce A.V."/>
            <person name="Peck A.I."/>
            <person name="Pelan S."/>
            <person name="Phelps K."/>
            <person name="Phillimore B.J."/>
            <person name="Plumb R."/>
            <person name="Rajan J."/>
            <person name="Raymond C."/>
            <person name="Rouse G."/>
            <person name="Saenphimmachak C."/>
            <person name="Sehra H.K."/>
            <person name="Sheridan E."/>
            <person name="Shownkeen R."/>
            <person name="Sims S."/>
            <person name="Skuce C.D."/>
            <person name="Smith M."/>
            <person name="Steward C."/>
            <person name="Subramanian S."/>
            <person name="Sycamore N."/>
            <person name="Tracey A."/>
            <person name="Tromans A."/>
            <person name="Van Helmond Z."/>
            <person name="Wall M."/>
            <person name="Wallis J.M."/>
            <person name="White S."/>
            <person name="Whitehead S.L."/>
            <person name="Wilkinson J.E."/>
            <person name="Willey D.L."/>
            <person name="Williams H."/>
            <person name="Wilming L."/>
            <person name="Wray P.W."/>
            <person name="Wu Z."/>
            <person name="Coulson A."/>
            <person name="Vaudin M."/>
            <person name="Sulston J.E."/>
            <person name="Durbin R.M."/>
            <person name="Hubbard T."/>
            <person name="Wooster R."/>
            <person name="Dunham I."/>
            <person name="Carter N.P."/>
            <person name="McVean G."/>
            <person name="Ross M.T."/>
            <person name="Harrow J."/>
            <person name="Olson M.V."/>
            <person name="Beck S."/>
            <person name="Rogers J."/>
            <person name="Bentley D.R."/>
        </authorList>
    </citation>
    <scope>NUCLEOTIDE SEQUENCE [LARGE SCALE GENOMIC DNA]</scope>
</reference>
<reference key="3">
    <citation type="journal article" date="2004" name="Genome Res.">
        <title>The status, quality, and expansion of the NIH full-length cDNA project: the Mammalian Gene Collection (MGC).</title>
        <authorList>
            <consortium name="The MGC Project Team"/>
        </authorList>
    </citation>
    <scope>NUCLEOTIDE SEQUENCE [LARGE SCALE MRNA] (ISOFORM 2)</scope>
    <source>
        <tissue>Brain</tissue>
    </source>
</reference>
<feature type="chain" id="PRO_0000047741" description="Zinc finger and BTB domain-containing protein 37">
    <location>
        <begin position="1"/>
        <end position="503"/>
    </location>
</feature>
<feature type="domain" description="BTB" evidence="1">
    <location>
        <begin position="32"/>
        <end position="96"/>
    </location>
</feature>
<feature type="zinc finger region" description="C2H2-type 1" evidence="2">
    <location>
        <begin position="373"/>
        <end position="395"/>
    </location>
</feature>
<feature type="zinc finger region" description="C2H2-type 2" evidence="2">
    <location>
        <begin position="401"/>
        <end position="423"/>
    </location>
</feature>
<feature type="zinc finger region" description="C2H2-type 3" evidence="2">
    <location>
        <begin position="429"/>
        <end position="452"/>
    </location>
</feature>
<feature type="region of interest" description="Disordered" evidence="3">
    <location>
        <begin position="140"/>
        <end position="206"/>
    </location>
</feature>
<feature type="region of interest" description="Disordered" evidence="3">
    <location>
        <begin position="280"/>
        <end position="344"/>
    </location>
</feature>
<feature type="region of interest" description="Disordered" evidence="3">
    <location>
        <begin position="457"/>
        <end position="503"/>
    </location>
</feature>
<feature type="compositionally biased region" description="Basic and acidic residues" evidence="3">
    <location>
        <begin position="144"/>
        <end position="154"/>
    </location>
</feature>
<feature type="compositionally biased region" description="Polar residues" evidence="3">
    <location>
        <begin position="155"/>
        <end position="167"/>
    </location>
</feature>
<feature type="compositionally biased region" description="Basic and acidic residues" evidence="3">
    <location>
        <begin position="319"/>
        <end position="336"/>
    </location>
</feature>
<feature type="compositionally biased region" description="Polar residues" evidence="3">
    <location>
        <begin position="465"/>
        <end position="474"/>
    </location>
</feature>
<feature type="splice variant" id="VSP_014440" description="In isoform 3." evidence="4">
    <location>
        <begin position="309"/>
        <end position="503"/>
    </location>
</feature>
<feature type="splice variant" id="VSP_014441" description="In isoform 2." evidence="5">
    <original>EESAMMGVSGYVEYLREQE</original>
    <variation>WSCGFRTALVVGGIATVYE</variation>
    <location>
        <begin position="343"/>
        <end position="361"/>
    </location>
</feature>
<feature type="splice variant" id="VSP_014442" description="In isoform 2." evidence="5">
    <location>
        <begin position="362"/>
        <end position="503"/>
    </location>
</feature>
<feature type="sequence conflict" description="In Ref. 1; BAB71422." evidence="6" ref="1">
    <original>H</original>
    <variation>R</variation>
    <location>
        <position position="153"/>
    </location>
</feature>
<organism>
    <name type="scientific">Homo sapiens</name>
    <name type="common">Human</name>
    <dbReference type="NCBI Taxonomy" id="9606"/>
    <lineage>
        <taxon>Eukaryota</taxon>
        <taxon>Metazoa</taxon>
        <taxon>Chordata</taxon>
        <taxon>Craniata</taxon>
        <taxon>Vertebrata</taxon>
        <taxon>Euteleostomi</taxon>
        <taxon>Mammalia</taxon>
        <taxon>Eutheria</taxon>
        <taxon>Euarchontoglires</taxon>
        <taxon>Primates</taxon>
        <taxon>Haplorrhini</taxon>
        <taxon>Catarrhini</taxon>
        <taxon>Hominidae</taxon>
        <taxon>Homo</taxon>
    </lineage>
</organism>
<dbReference type="EMBL" id="AK057310">
    <property type="protein sequence ID" value="BAB71422.1"/>
    <property type="molecule type" value="mRNA"/>
</dbReference>
<dbReference type="EMBL" id="AL136170">
    <property type="status" value="NOT_ANNOTATED_CDS"/>
    <property type="molecule type" value="Genomic_DNA"/>
</dbReference>
<dbReference type="EMBL" id="BC003116">
    <property type="protein sequence ID" value="AAH03116.1"/>
    <property type="molecule type" value="mRNA"/>
</dbReference>
<dbReference type="EMBL" id="BC006315">
    <property type="protein sequence ID" value="AAH06315.1"/>
    <property type="molecule type" value="mRNA"/>
</dbReference>
<dbReference type="CCDS" id="CCDS1312.1">
    <molecule id="Q5TC79-2"/>
</dbReference>
<dbReference type="CCDS" id="CCDS44278.1">
    <molecule id="Q5TC79-1"/>
</dbReference>
<dbReference type="CCDS" id="CCDS86033.1">
    <molecule id="Q5TC79-3"/>
</dbReference>
<dbReference type="RefSeq" id="NP_001116242.1">
    <molecule id="Q5TC79-1"/>
    <property type="nucleotide sequence ID" value="NM_001122770.3"/>
</dbReference>
<dbReference type="RefSeq" id="NP_001333044.1">
    <molecule id="Q5TC79-3"/>
    <property type="nucleotide sequence ID" value="NM_001346115.2"/>
</dbReference>
<dbReference type="RefSeq" id="NP_001356775.1">
    <molecule id="Q5TC79-3"/>
    <property type="nucleotide sequence ID" value="NM_001369846.1"/>
</dbReference>
<dbReference type="RefSeq" id="NP_001382128.1">
    <molecule id="Q5TC79-1"/>
    <property type="nucleotide sequence ID" value="NM_001395199.1"/>
</dbReference>
<dbReference type="RefSeq" id="NP_115911.1">
    <molecule id="Q5TC79-2"/>
    <property type="nucleotide sequence ID" value="NM_032522.5"/>
</dbReference>
<dbReference type="RefSeq" id="XP_006711641.1">
    <molecule id="Q5TC79-1"/>
    <property type="nucleotide sequence ID" value="XM_006711578.5"/>
</dbReference>
<dbReference type="RefSeq" id="XP_011508364.1">
    <molecule id="Q5TC79-3"/>
    <property type="nucleotide sequence ID" value="XM_011510062.4"/>
</dbReference>
<dbReference type="RefSeq" id="XP_016858045.1">
    <property type="nucleotide sequence ID" value="XM_017002556.1"/>
</dbReference>
<dbReference type="RefSeq" id="XP_016858046.1">
    <molecule id="Q5TC79-3"/>
    <property type="nucleotide sequence ID" value="XM_017002557.2"/>
</dbReference>
<dbReference type="RefSeq" id="XP_016858047.1">
    <molecule id="Q5TC79-3"/>
    <property type="nucleotide sequence ID" value="XM_017002558.2"/>
</dbReference>
<dbReference type="RefSeq" id="XP_047288153.1">
    <molecule id="Q5TC79-3"/>
    <property type="nucleotide sequence ID" value="XM_047432197.1"/>
</dbReference>
<dbReference type="RefSeq" id="XP_054195192.1">
    <molecule id="Q5TC79-1"/>
    <property type="nucleotide sequence ID" value="XM_054339217.1"/>
</dbReference>
<dbReference type="RefSeq" id="XP_054195193.1">
    <molecule id="Q5TC79-3"/>
    <property type="nucleotide sequence ID" value="XM_054339218.1"/>
</dbReference>
<dbReference type="RefSeq" id="XP_054195194.1">
    <molecule id="Q5TC79-3"/>
    <property type="nucleotide sequence ID" value="XM_054339219.1"/>
</dbReference>
<dbReference type="RefSeq" id="XP_054195195.1">
    <molecule id="Q5TC79-3"/>
    <property type="nucleotide sequence ID" value="XM_054339220.1"/>
</dbReference>
<dbReference type="RefSeq" id="XP_054195196.1">
    <molecule id="Q5TC79-3"/>
    <property type="nucleotide sequence ID" value="XM_054339221.1"/>
</dbReference>
<dbReference type="SMR" id="Q5TC79"/>
<dbReference type="BioGRID" id="124146">
    <property type="interactions" value="6"/>
</dbReference>
<dbReference type="FunCoup" id="Q5TC79">
    <property type="interactions" value="536"/>
</dbReference>
<dbReference type="IntAct" id="Q5TC79">
    <property type="interactions" value="4"/>
</dbReference>
<dbReference type="MINT" id="Q5TC79"/>
<dbReference type="STRING" id="9606.ENSP00000356674"/>
<dbReference type="GlyGen" id="Q5TC79">
    <property type="glycosylation" value="1 site, 1 O-linked glycan (1 site)"/>
</dbReference>
<dbReference type="iPTMnet" id="Q5TC79"/>
<dbReference type="PhosphoSitePlus" id="Q5TC79"/>
<dbReference type="BioMuta" id="ZBTB37"/>
<dbReference type="DMDM" id="68566168"/>
<dbReference type="jPOST" id="Q5TC79"/>
<dbReference type="MassIVE" id="Q5TC79"/>
<dbReference type="PaxDb" id="9606-ENSP00000356674"/>
<dbReference type="PeptideAtlas" id="Q5TC79"/>
<dbReference type="ProteomicsDB" id="64940">
    <molecule id="Q5TC79-1"/>
</dbReference>
<dbReference type="ProteomicsDB" id="64941">
    <molecule id="Q5TC79-2"/>
</dbReference>
<dbReference type="ProteomicsDB" id="64942">
    <molecule id="Q5TC79-3"/>
</dbReference>
<dbReference type="Antibodypedia" id="20565">
    <property type="antibodies" value="74 antibodies from 18 providers"/>
</dbReference>
<dbReference type="DNASU" id="84614"/>
<dbReference type="Ensembl" id="ENST00000367701.10">
    <molecule id="Q5TC79-1"/>
    <property type="protein sequence ID" value="ENSP00000356674.4"/>
    <property type="gene ID" value="ENSG00000185278.16"/>
</dbReference>
<dbReference type="Ensembl" id="ENST00000367702.1">
    <molecule id="Q5TC79-2"/>
    <property type="protein sequence ID" value="ENSP00000356675.1"/>
    <property type="gene ID" value="ENSG00000185278.16"/>
</dbReference>
<dbReference type="Ensembl" id="ENST00000367704.5">
    <molecule id="Q5TC79-3"/>
    <property type="protein sequence ID" value="ENSP00000356677.1"/>
    <property type="gene ID" value="ENSG00000185278.16"/>
</dbReference>
<dbReference type="Ensembl" id="ENST00000695459.1">
    <molecule id="Q5TC79-1"/>
    <property type="protein sequence ID" value="ENSP00000511931.1"/>
    <property type="gene ID" value="ENSG00000185278.16"/>
</dbReference>
<dbReference type="GeneID" id="84614"/>
<dbReference type="KEGG" id="hsa:84614"/>
<dbReference type="MANE-Select" id="ENST00000367701.10">
    <property type="protein sequence ID" value="ENSP00000356674.4"/>
    <property type="RefSeq nucleotide sequence ID" value="NM_001122770.3"/>
    <property type="RefSeq protein sequence ID" value="NP_001116242.1"/>
</dbReference>
<dbReference type="UCSC" id="uc001gjp.1">
    <molecule id="Q5TC79-1"/>
    <property type="organism name" value="human"/>
</dbReference>
<dbReference type="AGR" id="HGNC:28365"/>
<dbReference type="CTD" id="84614"/>
<dbReference type="DisGeNET" id="84614"/>
<dbReference type="GeneCards" id="ZBTB37"/>
<dbReference type="HGNC" id="HGNC:28365">
    <property type="gene designation" value="ZBTB37"/>
</dbReference>
<dbReference type="HPA" id="ENSG00000185278">
    <property type="expression patterns" value="Low tissue specificity"/>
</dbReference>
<dbReference type="neXtProt" id="NX_Q5TC79"/>
<dbReference type="OpenTargets" id="ENSG00000185278"/>
<dbReference type="PharmGKB" id="PA134911383"/>
<dbReference type="VEuPathDB" id="HostDB:ENSG00000185278"/>
<dbReference type="eggNOG" id="KOG1721">
    <property type="taxonomic scope" value="Eukaryota"/>
</dbReference>
<dbReference type="GeneTree" id="ENSGT00940000159554"/>
<dbReference type="HOGENOM" id="CLU_903017_0_0_1"/>
<dbReference type="InParanoid" id="Q5TC79"/>
<dbReference type="OMA" id="PMTERHR"/>
<dbReference type="OrthoDB" id="10261408at2759"/>
<dbReference type="PAN-GO" id="Q5TC79">
    <property type="GO annotations" value="4 GO annotations based on evolutionary models"/>
</dbReference>
<dbReference type="PhylomeDB" id="Q5TC79"/>
<dbReference type="TreeFam" id="TF331184"/>
<dbReference type="PathwayCommons" id="Q5TC79"/>
<dbReference type="SignaLink" id="Q5TC79"/>
<dbReference type="BioGRID-ORCS" id="84614">
    <property type="hits" value="10 hits in 1223 CRISPR screens"/>
</dbReference>
<dbReference type="GenomeRNAi" id="84614"/>
<dbReference type="Pharos" id="Q5TC79">
    <property type="development level" value="Tdark"/>
</dbReference>
<dbReference type="PRO" id="PR:Q5TC79"/>
<dbReference type="Proteomes" id="UP000005640">
    <property type="component" value="Chromosome 1"/>
</dbReference>
<dbReference type="RNAct" id="Q5TC79">
    <property type="molecule type" value="protein"/>
</dbReference>
<dbReference type="Bgee" id="ENSG00000185278">
    <property type="expression patterns" value="Expressed in sperm and 167 other cell types or tissues"/>
</dbReference>
<dbReference type="GO" id="GO:0000785">
    <property type="term" value="C:chromatin"/>
    <property type="evidence" value="ECO:0000247"/>
    <property type="project" value="NTNU_SB"/>
</dbReference>
<dbReference type="GO" id="GO:0005654">
    <property type="term" value="C:nucleoplasm"/>
    <property type="evidence" value="ECO:0000318"/>
    <property type="project" value="GO_Central"/>
</dbReference>
<dbReference type="GO" id="GO:0000981">
    <property type="term" value="F:DNA-binding transcription factor activity, RNA polymerase II-specific"/>
    <property type="evidence" value="ECO:0000247"/>
    <property type="project" value="NTNU_SB"/>
</dbReference>
<dbReference type="GO" id="GO:0001227">
    <property type="term" value="F:DNA-binding transcription repressor activity, RNA polymerase II-specific"/>
    <property type="evidence" value="ECO:0000318"/>
    <property type="project" value="GO_Central"/>
</dbReference>
<dbReference type="GO" id="GO:0000978">
    <property type="term" value="F:RNA polymerase II cis-regulatory region sequence-specific DNA binding"/>
    <property type="evidence" value="ECO:0000318"/>
    <property type="project" value="GO_Central"/>
</dbReference>
<dbReference type="GO" id="GO:1990837">
    <property type="term" value="F:sequence-specific double-stranded DNA binding"/>
    <property type="evidence" value="ECO:0000314"/>
    <property type="project" value="ARUK-UCL"/>
</dbReference>
<dbReference type="GO" id="GO:0008270">
    <property type="term" value="F:zinc ion binding"/>
    <property type="evidence" value="ECO:0007669"/>
    <property type="project" value="UniProtKB-KW"/>
</dbReference>
<dbReference type="GO" id="GO:0000122">
    <property type="term" value="P:negative regulation of transcription by RNA polymerase II"/>
    <property type="evidence" value="ECO:0000318"/>
    <property type="project" value="GO_Central"/>
</dbReference>
<dbReference type="GO" id="GO:0001817">
    <property type="term" value="P:regulation of cytokine production"/>
    <property type="evidence" value="ECO:0000318"/>
    <property type="project" value="GO_Central"/>
</dbReference>
<dbReference type="GO" id="GO:0002682">
    <property type="term" value="P:regulation of immune system process"/>
    <property type="evidence" value="ECO:0000318"/>
    <property type="project" value="GO_Central"/>
</dbReference>
<dbReference type="CDD" id="cd18222">
    <property type="entry name" value="BTB_POZ_ZBTB37"/>
    <property type="match status" value="1"/>
</dbReference>
<dbReference type="FunFam" id="3.30.160.60:FF:000119">
    <property type="entry name" value="Zinc finger and BTB domain containing 37"/>
    <property type="match status" value="1"/>
</dbReference>
<dbReference type="FunFam" id="3.30.160.60:FF:000422">
    <property type="entry name" value="Zinc finger and BTB domain containing 37"/>
    <property type="match status" value="1"/>
</dbReference>
<dbReference type="FunFam" id="3.30.710.10:FF:000009">
    <property type="entry name" value="Zinc finger and BTB domain-containing 37"/>
    <property type="match status" value="1"/>
</dbReference>
<dbReference type="FunFam" id="3.30.160.60:FF:000364">
    <property type="entry name" value="Zinc finger and BTB domain-containing protein 34"/>
    <property type="match status" value="1"/>
</dbReference>
<dbReference type="Gene3D" id="3.30.160.60">
    <property type="entry name" value="Classic Zinc Finger"/>
    <property type="match status" value="3"/>
</dbReference>
<dbReference type="Gene3D" id="3.30.710.10">
    <property type="entry name" value="Potassium Channel Kv1.1, Chain A"/>
    <property type="match status" value="1"/>
</dbReference>
<dbReference type="InterPro" id="IPR000210">
    <property type="entry name" value="BTB/POZ_dom"/>
</dbReference>
<dbReference type="InterPro" id="IPR011333">
    <property type="entry name" value="SKP1/BTB/POZ_sf"/>
</dbReference>
<dbReference type="InterPro" id="IPR036236">
    <property type="entry name" value="Znf_C2H2_sf"/>
</dbReference>
<dbReference type="InterPro" id="IPR013087">
    <property type="entry name" value="Znf_C2H2_type"/>
</dbReference>
<dbReference type="InterPro" id="IPR050457">
    <property type="entry name" value="ZnFinger_BTB_dom_contain"/>
</dbReference>
<dbReference type="PANTHER" id="PTHR46105">
    <property type="entry name" value="AGAP004733-PA"/>
    <property type="match status" value="1"/>
</dbReference>
<dbReference type="PANTHER" id="PTHR46105:SF32">
    <property type="entry name" value="ZINC FINGER AND BTB DOMAIN CONTAINING 37"/>
    <property type="match status" value="1"/>
</dbReference>
<dbReference type="Pfam" id="PF00651">
    <property type="entry name" value="BTB"/>
    <property type="match status" value="1"/>
</dbReference>
<dbReference type="Pfam" id="PF00096">
    <property type="entry name" value="zf-C2H2"/>
    <property type="match status" value="2"/>
</dbReference>
<dbReference type="Pfam" id="PF12874">
    <property type="entry name" value="zf-met"/>
    <property type="match status" value="1"/>
</dbReference>
<dbReference type="SMART" id="SM00225">
    <property type="entry name" value="BTB"/>
    <property type="match status" value="1"/>
</dbReference>
<dbReference type="SMART" id="SM00355">
    <property type="entry name" value="ZnF_C2H2"/>
    <property type="match status" value="3"/>
</dbReference>
<dbReference type="SUPFAM" id="SSF57667">
    <property type="entry name" value="beta-beta-alpha zinc fingers"/>
    <property type="match status" value="2"/>
</dbReference>
<dbReference type="SUPFAM" id="SSF54695">
    <property type="entry name" value="POZ domain"/>
    <property type="match status" value="1"/>
</dbReference>
<dbReference type="PROSITE" id="PS50097">
    <property type="entry name" value="BTB"/>
    <property type="match status" value="1"/>
</dbReference>
<dbReference type="PROSITE" id="PS00028">
    <property type="entry name" value="ZINC_FINGER_C2H2_1"/>
    <property type="match status" value="3"/>
</dbReference>
<dbReference type="PROSITE" id="PS50157">
    <property type="entry name" value="ZINC_FINGER_C2H2_2"/>
    <property type="match status" value="3"/>
</dbReference>
<name>ZBT37_HUMAN</name>
<protein>
    <recommendedName>
        <fullName>Zinc finger and BTB domain-containing protein 37</fullName>
    </recommendedName>
</protein>
<accession>Q5TC79</accession>
<accession>Q5TC80</accession>
<accession>Q96M87</accession>
<accession>Q9BQ88</accession>
<gene>
    <name type="primary">ZBTB37</name>
</gene>
<keyword id="KW-0025">Alternative splicing</keyword>
<keyword id="KW-0238">DNA-binding</keyword>
<keyword id="KW-0479">Metal-binding</keyword>
<keyword id="KW-0539">Nucleus</keyword>
<keyword id="KW-1267">Proteomics identification</keyword>
<keyword id="KW-1185">Reference proteome</keyword>
<keyword id="KW-0677">Repeat</keyword>
<keyword id="KW-0804">Transcription</keyword>
<keyword id="KW-0805">Transcription regulation</keyword>
<keyword id="KW-0862">Zinc</keyword>
<keyword id="KW-0863">Zinc-finger</keyword>